<gene>
    <name evidence="1" type="primary">ispD</name>
    <name type="ordered locus">Tbd_1003</name>
</gene>
<comment type="function">
    <text evidence="1">Catalyzes the formation of 4-diphosphocytidyl-2-C-methyl-D-erythritol from CTP and 2-C-methyl-D-erythritol 4-phosphate (MEP).</text>
</comment>
<comment type="catalytic activity">
    <reaction evidence="1">
        <text>2-C-methyl-D-erythritol 4-phosphate + CTP + H(+) = 4-CDP-2-C-methyl-D-erythritol + diphosphate</text>
        <dbReference type="Rhea" id="RHEA:13429"/>
        <dbReference type="ChEBI" id="CHEBI:15378"/>
        <dbReference type="ChEBI" id="CHEBI:33019"/>
        <dbReference type="ChEBI" id="CHEBI:37563"/>
        <dbReference type="ChEBI" id="CHEBI:57823"/>
        <dbReference type="ChEBI" id="CHEBI:58262"/>
        <dbReference type="EC" id="2.7.7.60"/>
    </reaction>
</comment>
<comment type="pathway">
    <text evidence="1">Isoprenoid biosynthesis; isopentenyl diphosphate biosynthesis via DXP pathway; isopentenyl diphosphate from 1-deoxy-D-xylulose 5-phosphate: step 2/6.</text>
</comment>
<comment type="similarity">
    <text evidence="1">Belongs to the IspD/TarI cytidylyltransferase family. IspD subfamily.</text>
</comment>
<feature type="chain" id="PRO_0000237834" description="2-C-methyl-D-erythritol 4-phosphate cytidylyltransferase">
    <location>
        <begin position="1"/>
        <end position="233"/>
    </location>
</feature>
<feature type="site" description="Transition state stabilizer" evidence="1">
    <location>
        <position position="15"/>
    </location>
</feature>
<feature type="site" description="Transition state stabilizer" evidence="1">
    <location>
        <position position="22"/>
    </location>
</feature>
<feature type="site" description="Positions MEP for the nucleophilic attack" evidence="1">
    <location>
        <position position="161"/>
    </location>
</feature>
<feature type="site" description="Positions MEP for the nucleophilic attack" evidence="1">
    <location>
        <position position="214"/>
    </location>
</feature>
<proteinExistence type="inferred from homology"/>
<evidence type="ECO:0000255" key="1">
    <source>
        <dbReference type="HAMAP-Rule" id="MF_00108"/>
    </source>
</evidence>
<accession>Q3SK38</accession>
<sequence>MKFYALIPAAGSGSRMGGAIEKQYMDVNSVPMIAHAMMVLAREPRIARIFVVLSPTDKRWNNYEWQGWEERIEVLRCGGGTRAETVLNALDAIAEVCDPADWVLVHDAARPCLPDEMLGKLLDEVADDPVGGLLAVPVADTLKRAAGDTSSGTRVEATVPRAGLWQAQTPQMFRHGTLTEALRAAGSDMTDEASAIEKLGLQPQLVESDSRNLKVTYPQDLELASLILGKMNA</sequence>
<dbReference type="EC" id="2.7.7.60" evidence="1"/>
<dbReference type="EMBL" id="CP000116">
    <property type="protein sequence ID" value="AAZ96956.1"/>
    <property type="molecule type" value="Genomic_DNA"/>
</dbReference>
<dbReference type="RefSeq" id="WP_011311515.1">
    <property type="nucleotide sequence ID" value="NC_007404.1"/>
</dbReference>
<dbReference type="SMR" id="Q3SK38"/>
<dbReference type="STRING" id="292415.Tbd_1003"/>
<dbReference type="KEGG" id="tbd:Tbd_1003"/>
<dbReference type="eggNOG" id="COG1211">
    <property type="taxonomic scope" value="Bacteria"/>
</dbReference>
<dbReference type="HOGENOM" id="CLU_061281_3_0_4"/>
<dbReference type="OrthoDB" id="9806837at2"/>
<dbReference type="UniPathway" id="UPA00056">
    <property type="reaction ID" value="UER00093"/>
</dbReference>
<dbReference type="Proteomes" id="UP000008291">
    <property type="component" value="Chromosome"/>
</dbReference>
<dbReference type="GO" id="GO:0050518">
    <property type="term" value="F:2-C-methyl-D-erythritol 4-phosphate cytidylyltransferase activity"/>
    <property type="evidence" value="ECO:0007669"/>
    <property type="project" value="UniProtKB-UniRule"/>
</dbReference>
<dbReference type="GO" id="GO:0019288">
    <property type="term" value="P:isopentenyl diphosphate biosynthetic process, methylerythritol 4-phosphate pathway"/>
    <property type="evidence" value="ECO:0007669"/>
    <property type="project" value="UniProtKB-UniRule"/>
</dbReference>
<dbReference type="CDD" id="cd02516">
    <property type="entry name" value="CDP-ME_synthetase"/>
    <property type="match status" value="1"/>
</dbReference>
<dbReference type="FunFam" id="3.90.550.10:FF:000003">
    <property type="entry name" value="2-C-methyl-D-erythritol 4-phosphate cytidylyltransferase"/>
    <property type="match status" value="1"/>
</dbReference>
<dbReference type="Gene3D" id="3.90.550.10">
    <property type="entry name" value="Spore Coat Polysaccharide Biosynthesis Protein SpsA, Chain A"/>
    <property type="match status" value="1"/>
</dbReference>
<dbReference type="HAMAP" id="MF_00108">
    <property type="entry name" value="IspD"/>
    <property type="match status" value="1"/>
</dbReference>
<dbReference type="InterPro" id="IPR001228">
    <property type="entry name" value="IspD"/>
</dbReference>
<dbReference type="InterPro" id="IPR034683">
    <property type="entry name" value="IspD/TarI"/>
</dbReference>
<dbReference type="InterPro" id="IPR050088">
    <property type="entry name" value="IspD/TarI_cytidylyltransf_bact"/>
</dbReference>
<dbReference type="InterPro" id="IPR018294">
    <property type="entry name" value="ISPD_synthase_CS"/>
</dbReference>
<dbReference type="InterPro" id="IPR029044">
    <property type="entry name" value="Nucleotide-diphossugar_trans"/>
</dbReference>
<dbReference type="NCBIfam" id="TIGR00453">
    <property type="entry name" value="ispD"/>
    <property type="match status" value="1"/>
</dbReference>
<dbReference type="PANTHER" id="PTHR32125">
    <property type="entry name" value="2-C-METHYL-D-ERYTHRITOL 4-PHOSPHATE CYTIDYLYLTRANSFERASE, CHLOROPLASTIC"/>
    <property type="match status" value="1"/>
</dbReference>
<dbReference type="PANTHER" id="PTHR32125:SF4">
    <property type="entry name" value="2-C-METHYL-D-ERYTHRITOL 4-PHOSPHATE CYTIDYLYLTRANSFERASE, CHLOROPLASTIC"/>
    <property type="match status" value="1"/>
</dbReference>
<dbReference type="Pfam" id="PF01128">
    <property type="entry name" value="IspD"/>
    <property type="match status" value="1"/>
</dbReference>
<dbReference type="SUPFAM" id="SSF53448">
    <property type="entry name" value="Nucleotide-diphospho-sugar transferases"/>
    <property type="match status" value="1"/>
</dbReference>
<dbReference type="PROSITE" id="PS01295">
    <property type="entry name" value="ISPD"/>
    <property type="match status" value="1"/>
</dbReference>
<name>ISPD_THIDA</name>
<organism>
    <name type="scientific">Thiobacillus denitrificans (strain ATCC 25259 / T1)</name>
    <dbReference type="NCBI Taxonomy" id="292415"/>
    <lineage>
        <taxon>Bacteria</taxon>
        <taxon>Pseudomonadati</taxon>
        <taxon>Pseudomonadota</taxon>
        <taxon>Betaproteobacteria</taxon>
        <taxon>Nitrosomonadales</taxon>
        <taxon>Thiobacillaceae</taxon>
        <taxon>Thiobacillus</taxon>
    </lineage>
</organism>
<reference key="1">
    <citation type="journal article" date="2006" name="J. Bacteriol.">
        <title>The genome sequence of the obligately chemolithoautotrophic, facultatively anaerobic bacterium Thiobacillus denitrificans.</title>
        <authorList>
            <person name="Beller H.R."/>
            <person name="Chain P.S."/>
            <person name="Letain T.E."/>
            <person name="Chakicherla A."/>
            <person name="Larimer F.W."/>
            <person name="Richardson P.M."/>
            <person name="Coleman M.A."/>
            <person name="Wood A.P."/>
            <person name="Kelly D.P."/>
        </authorList>
    </citation>
    <scope>NUCLEOTIDE SEQUENCE [LARGE SCALE GENOMIC DNA]</scope>
    <source>
        <strain>ATCC 25259 / T1</strain>
    </source>
</reference>
<protein>
    <recommendedName>
        <fullName evidence="1">2-C-methyl-D-erythritol 4-phosphate cytidylyltransferase</fullName>
        <ecNumber evidence="1">2.7.7.60</ecNumber>
    </recommendedName>
    <alternativeName>
        <fullName evidence="1">4-diphosphocytidyl-2C-methyl-D-erythritol synthase</fullName>
    </alternativeName>
    <alternativeName>
        <fullName evidence="1">MEP cytidylyltransferase</fullName>
        <shortName evidence="1">MCT</shortName>
    </alternativeName>
</protein>
<keyword id="KW-0414">Isoprene biosynthesis</keyword>
<keyword id="KW-0548">Nucleotidyltransferase</keyword>
<keyword id="KW-1185">Reference proteome</keyword>
<keyword id="KW-0808">Transferase</keyword>